<proteinExistence type="inferred from homology"/>
<protein>
    <recommendedName>
        <fullName evidence="1">Tryptophan synthase alpha chain</fullName>
        <ecNumber evidence="1">4.2.1.20</ecNumber>
    </recommendedName>
</protein>
<keyword id="KW-0028">Amino-acid biosynthesis</keyword>
<keyword id="KW-0057">Aromatic amino acid biosynthesis</keyword>
<keyword id="KW-0456">Lyase</keyword>
<keyword id="KW-1185">Reference proteome</keyword>
<keyword id="KW-0822">Tryptophan biosynthesis</keyword>
<dbReference type="EC" id="4.2.1.20" evidence="1"/>
<dbReference type="EMBL" id="BA000035">
    <property type="protein sequence ID" value="BAC19683.1"/>
    <property type="molecule type" value="Genomic_DNA"/>
</dbReference>
<dbReference type="RefSeq" id="WP_006768770.1">
    <property type="nucleotide sequence ID" value="NC_004369.1"/>
</dbReference>
<dbReference type="SMR" id="Q8FLJ5"/>
<dbReference type="STRING" id="196164.gene:10743323"/>
<dbReference type="KEGG" id="cef:CE2873"/>
<dbReference type="eggNOG" id="COG0159">
    <property type="taxonomic scope" value="Bacteria"/>
</dbReference>
<dbReference type="HOGENOM" id="CLU_016734_0_4_11"/>
<dbReference type="OrthoDB" id="9804578at2"/>
<dbReference type="UniPathway" id="UPA00035">
    <property type="reaction ID" value="UER00044"/>
</dbReference>
<dbReference type="Proteomes" id="UP000001409">
    <property type="component" value="Chromosome"/>
</dbReference>
<dbReference type="GO" id="GO:0005829">
    <property type="term" value="C:cytosol"/>
    <property type="evidence" value="ECO:0007669"/>
    <property type="project" value="TreeGrafter"/>
</dbReference>
<dbReference type="GO" id="GO:0004834">
    <property type="term" value="F:tryptophan synthase activity"/>
    <property type="evidence" value="ECO:0007669"/>
    <property type="project" value="UniProtKB-UniRule"/>
</dbReference>
<dbReference type="CDD" id="cd04724">
    <property type="entry name" value="Tryptophan_synthase_alpha"/>
    <property type="match status" value="1"/>
</dbReference>
<dbReference type="FunFam" id="3.20.20.70:FF:000037">
    <property type="entry name" value="Tryptophan synthase alpha chain"/>
    <property type="match status" value="1"/>
</dbReference>
<dbReference type="Gene3D" id="3.20.20.70">
    <property type="entry name" value="Aldolase class I"/>
    <property type="match status" value="1"/>
</dbReference>
<dbReference type="HAMAP" id="MF_00131">
    <property type="entry name" value="Trp_synth_alpha"/>
    <property type="match status" value="1"/>
</dbReference>
<dbReference type="InterPro" id="IPR013785">
    <property type="entry name" value="Aldolase_TIM"/>
</dbReference>
<dbReference type="InterPro" id="IPR011060">
    <property type="entry name" value="RibuloseP-bd_barrel"/>
</dbReference>
<dbReference type="InterPro" id="IPR018204">
    <property type="entry name" value="Trp_synthase_alpha_AS"/>
</dbReference>
<dbReference type="InterPro" id="IPR002028">
    <property type="entry name" value="Trp_synthase_suA"/>
</dbReference>
<dbReference type="NCBIfam" id="TIGR00262">
    <property type="entry name" value="trpA"/>
    <property type="match status" value="1"/>
</dbReference>
<dbReference type="PANTHER" id="PTHR43406:SF1">
    <property type="entry name" value="TRYPTOPHAN SYNTHASE ALPHA CHAIN, CHLOROPLASTIC"/>
    <property type="match status" value="1"/>
</dbReference>
<dbReference type="PANTHER" id="PTHR43406">
    <property type="entry name" value="TRYPTOPHAN SYNTHASE, ALPHA CHAIN"/>
    <property type="match status" value="1"/>
</dbReference>
<dbReference type="Pfam" id="PF00290">
    <property type="entry name" value="Trp_syntA"/>
    <property type="match status" value="1"/>
</dbReference>
<dbReference type="SUPFAM" id="SSF51366">
    <property type="entry name" value="Ribulose-phoshate binding barrel"/>
    <property type="match status" value="1"/>
</dbReference>
<dbReference type="PROSITE" id="PS00167">
    <property type="entry name" value="TRP_SYNTHASE_ALPHA"/>
    <property type="match status" value="1"/>
</dbReference>
<sequence>MSRYTDMFTRLDEAGEGAFVPFIMLNDPSPEDSFQIISTAIEAGADALELGVPFSDPVADGPTVAESHLRALDGGSTVDSCLALIARVREAYPEIPIGMLIYGNVPFTRGLDKFYREFAEAGADSILLPDVPVREGAPFIQAAEGAGIDPIFIAPAQASETTLEGVSAASKGYIYAISRDGVTGTERESSTTGLTDVVDNIKRFGGAPILLGFGISSPKHVADAIAAGAAGAITGSAITKIIASHCEGEHPNPSTITDPEGLRKELTEFISAMKAATKKQ</sequence>
<evidence type="ECO:0000255" key="1">
    <source>
        <dbReference type="HAMAP-Rule" id="MF_00131"/>
    </source>
</evidence>
<feature type="chain" id="PRO_0000098772" description="Tryptophan synthase alpha chain">
    <location>
        <begin position="1"/>
        <end position="280"/>
    </location>
</feature>
<feature type="active site" description="Proton acceptor" evidence="1">
    <location>
        <position position="49"/>
    </location>
</feature>
<feature type="active site" description="Proton acceptor" evidence="1">
    <location>
        <position position="60"/>
    </location>
</feature>
<name>TRPA_COREF</name>
<reference key="1">
    <citation type="journal article" date="2003" name="Genome Res.">
        <title>Comparative complete genome sequence analysis of the amino acid replacements responsible for the thermostability of Corynebacterium efficiens.</title>
        <authorList>
            <person name="Nishio Y."/>
            <person name="Nakamura Y."/>
            <person name="Kawarabayasi Y."/>
            <person name="Usuda Y."/>
            <person name="Kimura E."/>
            <person name="Sugimoto S."/>
            <person name="Matsui K."/>
            <person name="Yamagishi A."/>
            <person name="Kikuchi H."/>
            <person name="Ikeo K."/>
            <person name="Gojobori T."/>
        </authorList>
    </citation>
    <scope>NUCLEOTIDE SEQUENCE [LARGE SCALE GENOMIC DNA]</scope>
    <source>
        <strain>DSM 44549 / YS-314 / AJ 12310 / JCM 11189 / NBRC 100395</strain>
    </source>
</reference>
<gene>
    <name evidence="1" type="primary">trpA</name>
    <name type="ordered locus">CE2873</name>
</gene>
<organism>
    <name type="scientific">Corynebacterium efficiens (strain DSM 44549 / YS-314 / AJ 12310 / JCM 11189 / NBRC 100395)</name>
    <dbReference type="NCBI Taxonomy" id="196164"/>
    <lineage>
        <taxon>Bacteria</taxon>
        <taxon>Bacillati</taxon>
        <taxon>Actinomycetota</taxon>
        <taxon>Actinomycetes</taxon>
        <taxon>Mycobacteriales</taxon>
        <taxon>Corynebacteriaceae</taxon>
        <taxon>Corynebacterium</taxon>
    </lineage>
</organism>
<comment type="function">
    <text evidence="1">The alpha subunit is responsible for the aldol cleavage of indoleglycerol phosphate to indole and glyceraldehyde 3-phosphate.</text>
</comment>
<comment type="catalytic activity">
    <reaction evidence="1">
        <text>(1S,2R)-1-C-(indol-3-yl)glycerol 3-phosphate + L-serine = D-glyceraldehyde 3-phosphate + L-tryptophan + H2O</text>
        <dbReference type="Rhea" id="RHEA:10532"/>
        <dbReference type="ChEBI" id="CHEBI:15377"/>
        <dbReference type="ChEBI" id="CHEBI:33384"/>
        <dbReference type="ChEBI" id="CHEBI:57912"/>
        <dbReference type="ChEBI" id="CHEBI:58866"/>
        <dbReference type="ChEBI" id="CHEBI:59776"/>
        <dbReference type="EC" id="4.2.1.20"/>
    </reaction>
</comment>
<comment type="pathway">
    <text evidence="1">Amino-acid biosynthesis; L-tryptophan biosynthesis; L-tryptophan from chorismate: step 5/5.</text>
</comment>
<comment type="subunit">
    <text evidence="1">Tetramer of two alpha and two beta chains.</text>
</comment>
<comment type="similarity">
    <text evidence="1">Belongs to the TrpA family.</text>
</comment>
<accession>Q8FLJ5</accession>